<proteinExistence type="inferred from homology"/>
<protein>
    <recommendedName>
        <fullName>UPF0145 protein YbjQ</fullName>
    </recommendedName>
</protein>
<name>YBJQ_ECO57</name>
<dbReference type="EMBL" id="AE005174">
    <property type="protein sequence ID" value="AAG55248.1"/>
    <property type="molecule type" value="Genomic_DNA"/>
</dbReference>
<dbReference type="EMBL" id="BA000007">
    <property type="protein sequence ID" value="BAB34375.1"/>
    <property type="molecule type" value="Genomic_DNA"/>
</dbReference>
<dbReference type="PIR" id="D85598">
    <property type="entry name" value="D85598"/>
</dbReference>
<dbReference type="PIR" id="H90747">
    <property type="entry name" value="H90747"/>
</dbReference>
<dbReference type="RefSeq" id="NP_308979.1">
    <property type="nucleotide sequence ID" value="NC_002695.1"/>
</dbReference>
<dbReference type="RefSeq" id="WP_001160737.1">
    <property type="nucleotide sequence ID" value="NZ_VOAI01000006.1"/>
</dbReference>
<dbReference type="SMR" id="P0A8C3"/>
<dbReference type="STRING" id="155864.Z1099"/>
<dbReference type="GeneID" id="917708"/>
<dbReference type="KEGG" id="ece:Z1099"/>
<dbReference type="KEGG" id="ecs:ECs_0952"/>
<dbReference type="PATRIC" id="fig|386585.9.peg.1068"/>
<dbReference type="eggNOG" id="COG0393">
    <property type="taxonomic scope" value="Bacteria"/>
</dbReference>
<dbReference type="HOGENOM" id="CLU_117144_3_0_6"/>
<dbReference type="OMA" id="SGEAIMG"/>
<dbReference type="Proteomes" id="UP000000558">
    <property type="component" value="Chromosome"/>
</dbReference>
<dbReference type="Proteomes" id="UP000002519">
    <property type="component" value="Chromosome"/>
</dbReference>
<dbReference type="Gene3D" id="3.30.110.70">
    <property type="entry name" value="Hypothetical protein apc22750. Chain B"/>
    <property type="match status" value="1"/>
</dbReference>
<dbReference type="HAMAP" id="MF_00338">
    <property type="entry name" value="UPF0145"/>
    <property type="match status" value="1"/>
</dbReference>
<dbReference type="InterPro" id="IPR035439">
    <property type="entry name" value="UPF0145_dom_sf"/>
</dbReference>
<dbReference type="InterPro" id="IPR002765">
    <property type="entry name" value="UPF0145_YbjQ-like"/>
</dbReference>
<dbReference type="NCBIfam" id="NF002776">
    <property type="entry name" value="PRK02877.1"/>
    <property type="match status" value="1"/>
</dbReference>
<dbReference type="PANTHER" id="PTHR34068">
    <property type="entry name" value="UPF0145 PROTEIN YBJQ"/>
    <property type="match status" value="1"/>
</dbReference>
<dbReference type="PANTHER" id="PTHR34068:SF1">
    <property type="entry name" value="UPF0145 PROTEIN YBJQ"/>
    <property type="match status" value="1"/>
</dbReference>
<dbReference type="Pfam" id="PF01906">
    <property type="entry name" value="YbjQ_1"/>
    <property type="match status" value="1"/>
</dbReference>
<dbReference type="SUPFAM" id="SSF117782">
    <property type="entry name" value="YbjQ-like"/>
    <property type="match status" value="1"/>
</dbReference>
<feature type="chain" id="PRO_0000138467" description="UPF0145 protein YbjQ">
    <location>
        <begin position="1"/>
        <end position="107"/>
    </location>
</feature>
<gene>
    <name type="primary">ybjQ</name>
    <name type="ordered locus">Z1099</name>
    <name type="ordered locus">ECs0952</name>
</gene>
<accession>P0A8C3</accession>
<accession>P75819</accession>
<organism>
    <name type="scientific">Escherichia coli O157:H7</name>
    <dbReference type="NCBI Taxonomy" id="83334"/>
    <lineage>
        <taxon>Bacteria</taxon>
        <taxon>Pseudomonadati</taxon>
        <taxon>Pseudomonadota</taxon>
        <taxon>Gammaproteobacteria</taxon>
        <taxon>Enterobacterales</taxon>
        <taxon>Enterobacteriaceae</taxon>
        <taxon>Escherichia</taxon>
    </lineage>
</organism>
<comment type="similarity">
    <text evidence="1">Belongs to the UPF0145 family.</text>
</comment>
<evidence type="ECO:0000305" key="1"/>
<reference key="1">
    <citation type="journal article" date="2001" name="Nature">
        <title>Genome sequence of enterohaemorrhagic Escherichia coli O157:H7.</title>
        <authorList>
            <person name="Perna N.T."/>
            <person name="Plunkett G. III"/>
            <person name="Burland V."/>
            <person name="Mau B."/>
            <person name="Glasner J.D."/>
            <person name="Rose D.J."/>
            <person name="Mayhew G.F."/>
            <person name="Evans P.S."/>
            <person name="Gregor J."/>
            <person name="Kirkpatrick H.A."/>
            <person name="Posfai G."/>
            <person name="Hackett J."/>
            <person name="Klink S."/>
            <person name="Boutin A."/>
            <person name="Shao Y."/>
            <person name="Miller L."/>
            <person name="Grotbeck E.J."/>
            <person name="Davis N.W."/>
            <person name="Lim A."/>
            <person name="Dimalanta E.T."/>
            <person name="Potamousis K."/>
            <person name="Apodaca J."/>
            <person name="Anantharaman T.S."/>
            <person name="Lin J."/>
            <person name="Yen G."/>
            <person name="Schwartz D.C."/>
            <person name="Welch R.A."/>
            <person name="Blattner F.R."/>
        </authorList>
    </citation>
    <scope>NUCLEOTIDE SEQUENCE [LARGE SCALE GENOMIC DNA]</scope>
    <source>
        <strain>O157:H7 / EDL933 / ATCC 700927 / EHEC</strain>
    </source>
</reference>
<reference key="2">
    <citation type="journal article" date="2001" name="DNA Res.">
        <title>Complete genome sequence of enterohemorrhagic Escherichia coli O157:H7 and genomic comparison with a laboratory strain K-12.</title>
        <authorList>
            <person name="Hayashi T."/>
            <person name="Makino K."/>
            <person name="Ohnishi M."/>
            <person name="Kurokawa K."/>
            <person name="Ishii K."/>
            <person name="Yokoyama K."/>
            <person name="Han C.-G."/>
            <person name="Ohtsubo E."/>
            <person name="Nakayama K."/>
            <person name="Murata T."/>
            <person name="Tanaka M."/>
            <person name="Tobe T."/>
            <person name="Iida T."/>
            <person name="Takami H."/>
            <person name="Honda T."/>
            <person name="Sasakawa C."/>
            <person name="Ogasawara N."/>
            <person name="Yasunaga T."/>
            <person name="Kuhara S."/>
            <person name="Shiba T."/>
            <person name="Hattori M."/>
            <person name="Shinagawa H."/>
        </authorList>
    </citation>
    <scope>NUCLEOTIDE SEQUENCE [LARGE SCALE GENOMIC DNA]</scope>
    <source>
        <strain>O157:H7 / Sakai / RIMD 0509952 / EHEC</strain>
    </source>
</reference>
<sequence>MQFSTTPTLEGQTIVEYCGVVTGEAILGANIFRDFFAGIRDIVGGRSGAYEKELRKAREIAFEELGSQARALGADAVVGIDIDYETVGQNGSMLMVSVSGTAVKTRR</sequence>
<keyword id="KW-1185">Reference proteome</keyword>